<gene>
    <name evidence="10" type="primary">CYM</name>
</gene>
<reference evidence="12" key="1">
    <citation type="journal article" date="2006" name="Biochem. Biophys. Res. Commun.">
        <title>Characterization of recombinant camel chymosin reveals superior properties for the coagulation of bovine and camel milk.</title>
        <authorList>
            <person name="Kappeler S.R."/>
            <person name="van den Brink H.J.M."/>
            <person name="Rahbek-Nielsen H."/>
            <person name="Farah Z."/>
            <person name="Puhan Z."/>
            <person name="Hansen E.B."/>
            <person name="Johansen E."/>
        </authorList>
    </citation>
    <scope>NUCLEOTIDE SEQUENCE [MRNA]</scope>
    <scope>FUNCTION</scope>
    <scope>CATALYTIC ACTIVITY</scope>
    <scope>BIOPHYSICOCHEMICAL PROPERTIES</scope>
    <scope>BIOTECHNOLOGY</scope>
    <source>
        <tissue evidence="9 12">Gastric mucosa</tissue>
    </source>
</reference>
<reference evidence="13" key="2">
    <citation type="journal article" date="2013" name="Acta Crystallogr. D">
        <title>Camel and bovine chymosin: the relationship between their structures and cheese-making properties.</title>
        <authorList>
            <person name="Langholm Jensen J."/>
            <person name="Molgaard A."/>
            <person name="Navarro Poulsen J.C."/>
            <person name="Harboe M.K."/>
            <person name="Simonsen J.B."/>
            <person name="Lorentzen A.M."/>
            <person name="Hjerno K."/>
            <person name="van den Brink J.M."/>
            <person name="Qvist K.B."/>
            <person name="Larsen S."/>
        </authorList>
    </citation>
    <scope>PROTEIN SEQUENCE OF 59-74</scope>
    <scope>X-RAY CRYSTALLOGRAPHY (1.60 ANGSTROMS) OF 62-381</scope>
    <scope>FUNCTION</scope>
    <scope>CATALYTIC ACTIVITY</scope>
    <scope>IDENTIFICATION BY MASS SPECTROMETRY</scope>
    <scope>ACTIVE SITE</scope>
    <scope>GLYCOSYLATION AT ASN-158</scope>
    <scope>DISULFIDE BONDS</scope>
</reference>
<reference key="3">
    <citation type="journal article" date="2015" name="J. Dairy Sci.">
        <title>The function of the milk-clotting enzymes bovine and camel chymosin studied by a fluorescence resonance energy transfer assay.</title>
        <authorList>
            <person name="Jensen J.L."/>
            <person name="Jacobsen J."/>
            <person name="Moss M.L."/>
            <person name="Rasmussen F."/>
            <person name="Qvist K.B."/>
            <person name="Larsen S."/>
            <person name="van den Brink J.M."/>
        </authorList>
    </citation>
    <scope>FUNCTION</scope>
    <scope>CATALYTIC ACTIVITY</scope>
    <scope>BIOPHYSICOCHEMICAL PROPERTIES</scope>
</reference>
<reference key="4">
    <citation type="journal article" date="2015" name="Protein Expr. Purif.">
        <title>Expression and characterization of camel chymosin in Pichia pastoris.</title>
        <authorList>
            <person name="Wang N."/>
            <person name="Wang K.Y."/>
            <person name="Li G."/>
            <person name="Guo W."/>
            <person name="Liu D."/>
        </authorList>
    </citation>
    <scope>FUNCTION</scope>
    <scope>CATALYTIC ACTIVITY</scope>
    <scope>BIOPHYSICOCHEMICAL PROPERTIES</scope>
    <scope>BIOTECHNOLOGY</scope>
</reference>
<protein>
    <recommendedName>
        <fullName evidence="9 12">Chymosin</fullName>
        <ecNumber evidence="5 6 7 8">3.4.23.4</ecNumber>
    </recommendedName>
</protein>
<name>CHYM_CAMDR</name>
<proteinExistence type="evidence at protein level"/>
<accession>Q9GK11</accession>
<organism evidence="12">
    <name type="scientific">Camelus dromedarius</name>
    <name type="common">Dromedary</name>
    <name type="synonym">Arabian camel</name>
    <dbReference type="NCBI Taxonomy" id="9838"/>
    <lineage>
        <taxon>Eukaryota</taxon>
        <taxon>Metazoa</taxon>
        <taxon>Chordata</taxon>
        <taxon>Craniata</taxon>
        <taxon>Vertebrata</taxon>
        <taxon>Euteleostomi</taxon>
        <taxon>Mammalia</taxon>
        <taxon>Eutheria</taxon>
        <taxon>Laurasiatheria</taxon>
        <taxon>Artiodactyla</taxon>
        <taxon>Tylopoda</taxon>
        <taxon>Camelidae</taxon>
        <taxon>Camelus</taxon>
    </lineage>
</organism>
<dbReference type="EC" id="3.4.23.4" evidence="5 6 7 8"/>
<dbReference type="EMBL" id="AJ131677">
    <property type="protein sequence ID" value="CAC19554.1"/>
    <property type="molecule type" value="mRNA"/>
</dbReference>
<dbReference type="RefSeq" id="NP_001290503.1">
    <property type="nucleotide sequence ID" value="NM_001303574.1"/>
</dbReference>
<dbReference type="PDB" id="4AA9">
    <property type="method" value="X-ray"/>
    <property type="resolution" value="1.60 A"/>
    <property type="chains" value="A=62-381"/>
</dbReference>
<dbReference type="PDBsum" id="4AA9"/>
<dbReference type="SMR" id="Q9GK11"/>
<dbReference type="STRING" id="9838.ENSCDRP00005001942"/>
<dbReference type="MEROPS" id="A01.006"/>
<dbReference type="GlyCosmos" id="Q9GK11">
    <property type="glycosylation" value="2 sites, No reported glycans"/>
</dbReference>
<dbReference type="iPTMnet" id="Q9GK11"/>
<dbReference type="GeneID" id="105085668"/>
<dbReference type="KEGG" id="cdk:105085668"/>
<dbReference type="OrthoDB" id="771136at2759"/>
<dbReference type="BRENDA" id="3.4.23.4">
    <property type="organism ID" value="1085"/>
</dbReference>
<dbReference type="EvolutionaryTrace" id="Q9GK11"/>
<dbReference type="GO" id="GO:0004190">
    <property type="term" value="F:aspartic-type endopeptidase activity"/>
    <property type="evidence" value="ECO:0000314"/>
    <property type="project" value="UniProtKB"/>
</dbReference>
<dbReference type="GO" id="GO:0007586">
    <property type="term" value="P:digestion"/>
    <property type="evidence" value="ECO:0007669"/>
    <property type="project" value="UniProtKB-KW"/>
</dbReference>
<dbReference type="GO" id="GO:0051603">
    <property type="term" value="P:proteolysis involved in protein catabolic process"/>
    <property type="evidence" value="ECO:0000314"/>
    <property type="project" value="UniProtKB"/>
</dbReference>
<dbReference type="CDD" id="cd05478">
    <property type="entry name" value="pepsin_A"/>
    <property type="match status" value="1"/>
</dbReference>
<dbReference type="FunFam" id="2.40.70.10:FF:000006">
    <property type="entry name" value="Cathepsin E"/>
    <property type="match status" value="1"/>
</dbReference>
<dbReference type="FunFam" id="2.40.70.10:FF:000004">
    <property type="entry name" value="Pepsin A"/>
    <property type="match status" value="1"/>
</dbReference>
<dbReference type="Gene3D" id="6.10.140.60">
    <property type="match status" value="1"/>
</dbReference>
<dbReference type="Gene3D" id="2.40.70.10">
    <property type="entry name" value="Acid Proteases"/>
    <property type="match status" value="2"/>
</dbReference>
<dbReference type="InterPro" id="IPR001461">
    <property type="entry name" value="Aspartic_peptidase_A1"/>
</dbReference>
<dbReference type="InterPro" id="IPR001969">
    <property type="entry name" value="Aspartic_peptidase_AS"/>
</dbReference>
<dbReference type="InterPro" id="IPR012848">
    <property type="entry name" value="Aspartic_peptidase_N"/>
</dbReference>
<dbReference type="InterPro" id="IPR034162">
    <property type="entry name" value="Pepsin_A"/>
</dbReference>
<dbReference type="InterPro" id="IPR033121">
    <property type="entry name" value="PEPTIDASE_A1"/>
</dbReference>
<dbReference type="InterPro" id="IPR021109">
    <property type="entry name" value="Peptidase_aspartic_dom_sf"/>
</dbReference>
<dbReference type="PANTHER" id="PTHR47966">
    <property type="entry name" value="BETA-SITE APP-CLEAVING ENZYME, ISOFORM A-RELATED"/>
    <property type="match status" value="1"/>
</dbReference>
<dbReference type="PANTHER" id="PTHR47966:SF13">
    <property type="entry name" value="CHYMOSIN"/>
    <property type="match status" value="1"/>
</dbReference>
<dbReference type="Pfam" id="PF07966">
    <property type="entry name" value="A1_Propeptide"/>
    <property type="match status" value="1"/>
</dbReference>
<dbReference type="Pfam" id="PF00026">
    <property type="entry name" value="Asp"/>
    <property type="match status" value="1"/>
</dbReference>
<dbReference type="PRINTS" id="PR00792">
    <property type="entry name" value="PEPSIN"/>
</dbReference>
<dbReference type="SUPFAM" id="SSF50630">
    <property type="entry name" value="Acid proteases"/>
    <property type="match status" value="1"/>
</dbReference>
<dbReference type="PROSITE" id="PS00141">
    <property type="entry name" value="ASP_PROTEASE"/>
    <property type="match status" value="2"/>
</dbReference>
<dbReference type="PROSITE" id="PS51767">
    <property type="entry name" value="PEPTIDASE_A1"/>
    <property type="match status" value="1"/>
</dbReference>
<feature type="signal peptide" evidence="1">
    <location>
        <begin position="1"/>
        <end position="16"/>
    </location>
</feature>
<feature type="propeptide" id="PRO_0000438462" description="Activation peptide" evidence="11">
    <location>
        <begin position="17"/>
        <end position="58"/>
    </location>
</feature>
<feature type="chain" id="PRO_5004326438" description="Chymosin">
    <location>
        <begin position="59"/>
        <end position="381"/>
    </location>
</feature>
<feature type="domain" description="Peptidase A1" evidence="3">
    <location>
        <begin position="74"/>
        <end position="378"/>
    </location>
</feature>
<feature type="active site" evidence="3 6">
    <location>
        <position position="92"/>
    </location>
</feature>
<feature type="active site" evidence="3 6">
    <location>
        <position position="274"/>
    </location>
</feature>
<feature type="glycosylation site" description="N-linked (GlcNAc...) asparagine" evidence="6 13">
    <location>
        <position position="158"/>
    </location>
</feature>
<feature type="glycosylation site" description="N-linked (GlcNAc...) asparagine" evidence="11">
    <location>
        <position position="349"/>
    </location>
</feature>
<feature type="disulfide bond" evidence="6 13">
    <location>
        <begin position="105"/>
        <end position="110"/>
    </location>
</feature>
<feature type="disulfide bond" evidence="6 13">
    <location>
        <begin position="265"/>
        <end position="269"/>
    </location>
</feature>
<feature type="disulfide bond" evidence="3 6 13">
    <location>
        <begin position="308"/>
        <end position="341"/>
    </location>
</feature>
<feature type="strand" evidence="14">
    <location>
        <begin position="75"/>
        <end position="80"/>
    </location>
</feature>
<feature type="turn" evidence="14">
    <location>
        <begin position="81"/>
        <end position="84"/>
    </location>
</feature>
<feature type="strand" evidence="14">
    <location>
        <begin position="85"/>
        <end position="92"/>
    </location>
</feature>
<feature type="strand" evidence="14">
    <location>
        <begin position="98"/>
        <end position="102"/>
    </location>
</feature>
<feature type="helix" evidence="14">
    <location>
        <begin position="108"/>
        <end position="111"/>
    </location>
</feature>
<feature type="helix" evidence="14">
    <location>
        <begin position="118"/>
        <end position="120"/>
    </location>
</feature>
<feature type="strand" evidence="14">
    <location>
        <begin position="125"/>
        <end position="135"/>
    </location>
</feature>
<feature type="strand" evidence="14">
    <location>
        <begin position="138"/>
        <end position="151"/>
    </location>
</feature>
<feature type="strand" evidence="14">
    <location>
        <begin position="154"/>
        <end position="166"/>
    </location>
</feature>
<feature type="helix" evidence="14">
    <location>
        <begin position="170"/>
        <end position="173"/>
    </location>
</feature>
<feature type="strand" evidence="14">
    <location>
        <begin position="178"/>
        <end position="182"/>
    </location>
</feature>
<feature type="helix" evidence="14">
    <location>
        <begin position="186"/>
        <end position="188"/>
    </location>
</feature>
<feature type="helix" evidence="14">
    <location>
        <begin position="196"/>
        <end position="202"/>
    </location>
</feature>
<feature type="strand" evidence="14">
    <location>
        <begin position="206"/>
        <end position="214"/>
    </location>
</feature>
<feature type="strand" evidence="14">
    <location>
        <begin position="217"/>
        <end position="220"/>
    </location>
</feature>
<feature type="strand" evidence="14">
    <location>
        <begin position="223"/>
        <end position="227"/>
    </location>
</feature>
<feature type="helix" evidence="14">
    <location>
        <begin position="231"/>
        <end position="233"/>
    </location>
</feature>
<feature type="strand" evidence="14">
    <location>
        <begin position="234"/>
        <end position="242"/>
    </location>
</feature>
<feature type="turn" evidence="14">
    <location>
        <begin position="246"/>
        <end position="249"/>
    </location>
</feature>
<feature type="strand" evidence="14">
    <location>
        <begin position="250"/>
        <end position="253"/>
    </location>
</feature>
<feature type="strand" evidence="14">
    <location>
        <begin position="255"/>
        <end position="258"/>
    </location>
</feature>
<feature type="strand" evidence="14">
    <location>
        <begin position="261"/>
        <end position="265"/>
    </location>
</feature>
<feature type="strand" evidence="14">
    <location>
        <begin position="269"/>
        <end position="273"/>
    </location>
</feature>
<feature type="strand" evidence="14">
    <location>
        <begin position="278"/>
        <end position="283"/>
    </location>
</feature>
<feature type="helix" evidence="14">
    <location>
        <begin position="284"/>
        <end position="293"/>
    </location>
</feature>
<feature type="strand" evidence="14">
    <location>
        <begin position="304"/>
        <end position="306"/>
    </location>
</feature>
<feature type="helix" evidence="14">
    <location>
        <begin position="308"/>
        <end position="313"/>
    </location>
</feature>
<feature type="strand" evidence="14">
    <location>
        <begin position="317"/>
        <end position="321"/>
    </location>
</feature>
<feature type="strand" evidence="14">
    <location>
        <begin position="324"/>
        <end position="328"/>
    </location>
</feature>
<feature type="helix" evidence="14">
    <location>
        <begin position="330"/>
        <end position="333"/>
    </location>
</feature>
<feature type="strand" evidence="14">
    <location>
        <begin position="334"/>
        <end position="337"/>
    </location>
</feature>
<feature type="strand" evidence="14">
    <location>
        <begin position="340"/>
        <end position="348"/>
    </location>
</feature>
<feature type="strand" evidence="14">
    <location>
        <begin position="354"/>
        <end position="356"/>
    </location>
</feature>
<feature type="helix" evidence="14">
    <location>
        <begin position="358"/>
        <end position="361"/>
    </location>
</feature>
<feature type="strand" evidence="14">
    <location>
        <begin position="364"/>
        <end position="369"/>
    </location>
</feature>
<feature type="turn" evidence="14">
    <location>
        <begin position="370"/>
        <end position="373"/>
    </location>
</feature>
<feature type="strand" evidence="14">
    <location>
        <begin position="374"/>
        <end position="380"/>
    </location>
</feature>
<keyword id="KW-0002">3D-structure</keyword>
<keyword id="KW-0064">Aspartyl protease</keyword>
<keyword id="KW-0222">Digestion</keyword>
<keyword id="KW-0903">Direct protein sequencing</keyword>
<keyword id="KW-1015">Disulfide bond</keyword>
<keyword id="KW-0325">Glycoprotein</keyword>
<keyword id="KW-0378">Hydrolase</keyword>
<keyword id="KW-0645">Protease</keyword>
<keyword id="KW-0732">Signal</keyword>
<keyword id="KW-0865">Zymogen</keyword>
<sequence>MRCLVVLLAALALSQASGITRIPLHKGKTLRKALKERGLLEDFLQRQQYAVSSKYSSLGKVAREPLTSYLDSQYFGKIYIGTPPQEFTVVFDTGSSDLWVPSIYCKSNVCKNHHRFDPRKSSTFRNLGKPLSIHYGTGSMEGFLGYDTVTVSNIVDPNQTVGLSTEQPGEVFTYSEFDGILGLAYPSLASEYSVPVFDNMMDRHLVARDLFSVYMDRNGQGSMLTLGAIDPSYYTGSLHWVPVTLQQYWQFTVDSVTINGVAVACVGGCQAILDTGTSVLFGPSSDILKIQMAIGATENRYGEFDVNCGNLRSMPTVVFEINGRDYPLSPSAYTSKDQGFCTSGFQGDNNSELWILGDVFIREYYSVFDRANNRVGLAKAI</sequence>
<comment type="function">
    <text evidence="5 6 7 8">Chymosin is synthesized in the mucosa of the abomasum (fourth stomach) of young (unweaned) ruminants (PubMed:16488399). The enzyme hydrolyzes casein to paracasein (PubMed:16488399, PubMed:23633601, PubMed:25726113, PubMed:25837439).</text>
</comment>
<comment type="catalytic activity">
    <reaction evidence="5 6 7 8">
        <text>Broad specificity similar to that of pepsin A. Clots milk by cleavage of a single 104-Ser-Phe-|-Met-Ala-107 bond in kappa-chain of casein.</text>
        <dbReference type="EC" id="3.4.23.4"/>
    </reaction>
</comment>
<comment type="biophysicochemical properties">
    <kinetics>
        <KM evidence="5">56 uM for undecapeptide analog to chymosin sensitive region of camel kappa-chain of casein</KM>
        <KM evidence="5">77 uM for undecapeptide analog to chymosin sensitive region of bovine kappa-chain of casein</KM>
        <KM evidence="7">18 uM for a labeled peptide substrate of 98-112 of bovine kappa-chain of casein (unglycosylated form of chymosin at pH 6.7)</KM>
        <KM evidence="7">11 uM for a labeled peptide substrate of 98-112 of bovine kappa-chain of casein (unglycosylated form of chymosin at pH 6.0)</KM>
        <KM evidence="7">7 uM for a labeled peptide substrate of 98-112 of bovine kappa-chain of casein (unglycosylated form of chymosin at pH 5.5)</KM>
        <KM evidence="7">20 uM for a labeled peptide substrate of 98-112 of bovine kappa-chain of casein (double-glycosylated form of chymosin at pH 6.7)</KM>
        <KM evidence="7">11 uM for a labeled peptide substrate of 98-112 of bovine kappa-chain of casein (double-glycosylated form of chymosin at pH 6.0)</KM>
        <KM evidence="7">8 uM for a labeled peptide substrate of 98-112 of bovine kappa-chain of casein (double-glycosylated form of chymosin at pH 5.5)</KM>
        <text evidence="5 7 8">kcat is 5.1 sec(-1) for undecapeptide analog to chymosin sensitive region of camel kappa-chain of casein and kcat is 11.7 sec(-1) for undecapeptide analog to chymosin sensitive region of bovine kappa-chain of casein (PubMed:16488399). Activity is 462 International Milk-Clotting Units (IMCU) per mg enzyme. kcat is 11 sec(-1) for a labeled peptide substrate of 98-112 of bovine kappa-chain of casein (unglycosylated form of chymosin at pH 6.7), kcat is 53 sec(-1) for a labeled peptide substrate of 98-112 of bovine kappa-chain of casein (unglycosylated form of chymosin at pH 6.0), kcat is 47 sec(-1) for a labeled peptide substrate of 98-112 of bovine kappa-chain of casein (unglycosylated form of chymosin at pH 5.5), kcat is 14 sec(-1) for a labeled peptide substrate of 98-112 of bovine kappa-chain of casein (double-glycosylated form of chymosin at pH 6.7), kcat is 65 sec(-1) for a labeled peptide substrate of 98-112 of bovine kappa-chain of casein (double-glycosylated form of chymosin at pH 6.0) and kcat is 59 sec(-1) for a labeled peptide substrate of 98-112 of bovine kappa-chain of casein (double-glycosylated form of chymosin at pH 5.5) (PubMed:25726113). Activity is 400 IMCU per ml enzyme. Supplemental CaCl(2) at concentration between 20-40 mM is optimal for stable enzyme activity (PubMed:25837439).</text>
    </kinetics>
    <phDependence>
        <text evidence="5 8">Optimum pH is about 5.1 (PubMed:16488399). Activity decreases with increasing pH values (PubMed:25837439).</text>
    </phDependence>
    <temperatureDependence>
        <text evidence="5 8">Optimum temperature is between 45-55 degrees Celsius (PubMed:16488399, PubMed:25837439). 50% activity at 35 and 60 degrees Celsius. No activity below 20 or above 70 degrees Celsius (PubMed:25837439).</text>
    </temperatureDependence>
</comment>
<comment type="biotechnology">
    <text evidence="5 8">The extraordinary high clotting activity, combined with its very low non-specific activity may be useful in the production of cheese types, for which a bitter taste is unfavorable, for example Mascarpone type cheese (PubMed:16488399). Large-scale expression of camel chymosin gene in P.pastoris could represent an excellent system for producing active chymosin for potential use in the commercial production of cheese (PubMed:25837439).</text>
</comment>
<comment type="similarity">
    <text evidence="2 3 4 10">Belongs to the peptidase A1 family.</text>
</comment>
<evidence type="ECO:0000250" key="1">
    <source>
        <dbReference type="UniProtKB" id="Q9N2D2"/>
    </source>
</evidence>
<evidence type="ECO:0000255" key="2"/>
<evidence type="ECO:0000255" key="3">
    <source>
        <dbReference type="PROSITE-ProRule" id="PRU01103"/>
    </source>
</evidence>
<evidence type="ECO:0000255" key="4">
    <source>
        <dbReference type="RuleBase" id="RU000454"/>
    </source>
</evidence>
<evidence type="ECO:0000269" key="5">
    <source>
    </source>
</evidence>
<evidence type="ECO:0000269" key="6">
    <source>
    </source>
</evidence>
<evidence type="ECO:0000269" key="7">
    <source>
    </source>
</evidence>
<evidence type="ECO:0000269" key="8">
    <source>
    </source>
</evidence>
<evidence type="ECO:0000303" key="9">
    <source>
    </source>
</evidence>
<evidence type="ECO:0000305" key="10"/>
<evidence type="ECO:0000305" key="11">
    <source>
    </source>
</evidence>
<evidence type="ECO:0000312" key="12">
    <source>
        <dbReference type="EMBL" id="CAC19554.1"/>
    </source>
</evidence>
<evidence type="ECO:0007744" key="13">
    <source>
        <dbReference type="PDB" id="4AA9"/>
    </source>
</evidence>
<evidence type="ECO:0007829" key="14">
    <source>
        <dbReference type="PDB" id="4AA9"/>
    </source>
</evidence>